<protein>
    <recommendedName>
        <fullName evidence="1">Phosphoglycerate kinase</fullName>
        <ecNumber evidence="1">2.7.2.3</ecNumber>
    </recommendedName>
</protein>
<accession>B6YWL5</accession>
<name>PGK_THEON</name>
<feature type="chain" id="PRO_1000192863" description="Phosphoglycerate kinase">
    <location>
        <begin position="1"/>
        <end position="414"/>
    </location>
</feature>
<feature type="binding site" evidence="1">
    <location>
        <begin position="19"/>
        <end position="21"/>
    </location>
    <ligand>
        <name>substrate</name>
    </ligand>
</feature>
<feature type="binding site" evidence="1">
    <location>
        <position position="34"/>
    </location>
    <ligand>
        <name>substrate</name>
    </ligand>
</feature>
<feature type="binding site" evidence="1">
    <location>
        <begin position="57"/>
        <end position="60"/>
    </location>
    <ligand>
        <name>substrate</name>
    </ligand>
</feature>
<feature type="binding site" evidence="1">
    <location>
        <position position="114"/>
    </location>
    <ligand>
        <name>substrate</name>
    </ligand>
</feature>
<feature type="binding site" evidence="1">
    <location>
        <position position="154"/>
    </location>
    <ligand>
        <name>substrate</name>
    </ligand>
</feature>
<feature type="binding site" evidence="1">
    <location>
        <position position="332"/>
    </location>
    <ligand>
        <name>ATP</name>
        <dbReference type="ChEBI" id="CHEBI:30616"/>
    </ligand>
</feature>
<feature type="binding site" evidence="1">
    <location>
        <begin position="358"/>
        <end position="361"/>
    </location>
    <ligand>
        <name>ATP</name>
        <dbReference type="ChEBI" id="CHEBI:30616"/>
    </ligand>
</feature>
<organism>
    <name type="scientific">Thermococcus onnurineus (strain NA1)</name>
    <dbReference type="NCBI Taxonomy" id="523850"/>
    <lineage>
        <taxon>Archaea</taxon>
        <taxon>Methanobacteriati</taxon>
        <taxon>Methanobacteriota</taxon>
        <taxon>Thermococci</taxon>
        <taxon>Thermococcales</taxon>
        <taxon>Thermococcaceae</taxon>
        <taxon>Thermococcus</taxon>
    </lineage>
</organism>
<proteinExistence type="inferred from homology"/>
<keyword id="KW-0067">ATP-binding</keyword>
<keyword id="KW-0963">Cytoplasm</keyword>
<keyword id="KW-0324">Glycolysis</keyword>
<keyword id="KW-0418">Kinase</keyword>
<keyword id="KW-0547">Nucleotide-binding</keyword>
<keyword id="KW-0808">Transferase</keyword>
<reference key="1">
    <citation type="journal article" date="2008" name="J. Bacteriol.">
        <title>The complete genome sequence of Thermococcus onnurineus NA1 reveals a mixed heterotrophic and carboxydotrophic metabolism.</title>
        <authorList>
            <person name="Lee H.S."/>
            <person name="Kang S.G."/>
            <person name="Bae S.S."/>
            <person name="Lim J.K."/>
            <person name="Cho Y."/>
            <person name="Kim Y.J."/>
            <person name="Jeon J.H."/>
            <person name="Cha S.-S."/>
            <person name="Kwon K.K."/>
            <person name="Kim H.-T."/>
            <person name="Park C.-J."/>
            <person name="Lee H.-W."/>
            <person name="Kim S.I."/>
            <person name="Chun J."/>
            <person name="Colwell R.R."/>
            <person name="Kim S.-J."/>
            <person name="Lee J.-H."/>
        </authorList>
    </citation>
    <scope>NUCLEOTIDE SEQUENCE [LARGE SCALE GENOMIC DNA]</scope>
    <source>
        <strain>NA1</strain>
    </source>
</reference>
<sequence>MFRLTDFTYHGKTVFLRADLNSPVKDGRIISDARFRAVLPTIQHLLDEGAKLVIGTHQSKPYKGDYITTEQHAEILSNLLGQEVEYVEDIFGKYARERIKTLKPGEAIILENLRFAAEDVKYKPLEECERTHFVRKLAPLLDYVVNDAFAAAHRSQPSLVGLARLKPMIMGFLMEKEVEALSRAYETNEKPRIYVLGGAKVDDSLRVAENVLRNGRADLILTGGLVGHVFTLAKGFHLGDANLEFMAKKGLLELVDWAENILDEFYPYVRTPVDFAVDYKGERVEVDLLSDEKWLFDKYPILDIGSRTIEKYRDVLMNARVIVANGPMGVFEREEFALGTVGVFRAIGESQAFSVVGGGHSIASIYQYNITGISHVSTGGGAMLSFFSGEKLPILEAFRISYERFKDKIERGPK</sequence>
<gene>
    <name evidence="1" type="primary">pgk</name>
    <name type="ordered locus">TON_0990</name>
</gene>
<comment type="catalytic activity">
    <reaction evidence="1">
        <text>(2R)-3-phosphoglycerate + ATP = (2R)-3-phospho-glyceroyl phosphate + ADP</text>
        <dbReference type="Rhea" id="RHEA:14801"/>
        <dbReference type="ChEBI" id="CHEBI:30616"/>
        <dbReference type="ChEBI" id="CHEBI:57604"/>
        <dbReference type="ChEBI" id="CHEBI:58272"/>
        <dbReference type="ChEBI" id="CHEBI:456216"/>
        <dbReference type="EC" id="2.7.2.3"/>
    </reaction>
</comment>
<comment type="pathway">
    <text evidence="1">Carbohydrate degradation; glycolysis; pyruvate from D-glyceraldehyde 3-phosphate: step 2/5.</text>
</comment>
<comment type="subunit">
    <text evidence="1">Monomer.</text>
</comment>
<comment type="subcellular location">
    <subcellularLocation>
        <location evidence="1">Cytoplasm</location>
    </subcellularLocation>
</comment>
<comment type="similarity">
    <text evidence="1">Belongs to the phosphoglycerate kinase family.</text>
</comment>
<dbReference type="EC" id="2.7.2.3" evidence="1"/>
<dbReference type="EMBL" id="CP000855">
    <property type="protein sequence ID" value="ACJ16478.1"/>
    <property type="molecule type" value="Genomic_DNA"/>
</dbReference>
<dbReference type="RefSeq" id="WP_012571950.1">
    <property type="nucleotide sequence ID" value="NC_011529.1"/>
</dbReference>
<dbReference type="SMR" id="B6YWL5"/>
<dbReference type="STRING" id="523850.TON_0990"/>
<dbReference type="GeneID" id="7017294"/>
<dbReference type="KEGG" id="ton:TON_0990"/>
<dbReference type="PATRIC" id="fig|523850.10.peg.998"/>
<dbReference type="eggNOG" id="arCOG00496">
    <property type="taxonomic scope" value="Archaea"/>
</dbReference>
<dbReference type="HOGENOM" id="CLU_025427_0_2_2"/>
<dbReference type="OrthoDB" id="6575at2157"/>
<dbReference type="UniPathway" id="UPA00109">
    <property type="reaction ID" value="UER00185"/>
</dbReference>
<dbReference type="Proteomes" id="UP000002727">
    <property type="component" value="Chromosome"/>
</dbReference>
<dbReference type="GO" id="GO:0005829">
    <property type="term" value="C:cytosol"/>
    <property type="evidence" value="ECO:0007669"/>
    <property type="project" value="TreeGrafter"/>
</dbReference>
<dbReference type="GO" id="GO:0043531">
    <property type="term" value="F:ADP binding"/>
    <property type="evidence" value="ECO:0007669"/>
    <property type="project" value="TreeGrafter"/>
</dbReference>
<dbReference type="GO" id="GO:0005524">
    <property type="term" value="F:ATP binding"/>
    <property type="evidence" value="ECO:0007669"/>
    <property type="project" value="UniProtKB-KW"/>
</dbReference>
<dbReference type="GO" id="GO:0004618">
    <property type="term" value="F:phosphoglycerate kinase activity"/>
    <property type="evidence" value="ECO:0007669"/>
    <property type="project" value="UniProtKB-UniRule"/>
</dbReference>
<dbReference type="GO" id="GO:0006094">
    <property type="term" value="P:gluconeogenesis"/>
    <property type="evidence" value="ECO:0007669"/>
    <property type="project" value="TreeGrafter"/>
</dbReference>
<dbReference type="GO" id="GO:0006096">
    <property type="term" value="P:glycolytic process"/>
    <property type="evidence" value="ECO:0007669"/>
    <property type="project" value="UniProtKB-UniRule"/>
</dbReference>
<dbReference type="FunFam" id="3.40.50.1260:FF:000006">
    <property type="entry name" value="Phosphoglycerate kinase"/>
    <property type="match status" value="1"/>
</dbReference>
<dbReference type="FunFam" id="3.40.50.1260:FF:000012">
    <property type="entry name" value="Phosphoglycerate kinase"/>
    <property type="match status" value="1"/>
</dbReference>
<dbReference type="Gene3D" id="3.40.50.1260">
    <property type="entry name" value="Phosphoglycerate kinase, N-terminal domain"/>
    <property type="match status" value="2"/>
</dbReference>
<dbReference type="HAMAP" id="MF_00145">
    <property type="entry name" value="Phosphoglyc_kinase"/>
    <property type="match status" value="1"/>
</dbReference>
<dbReference type="InterPro" id="IPR001576">
    <property type="entry name" value="Phosphoglycerate_kinase"/>
</dbReference>
<dbReference type="InterPro" id="IPR015911">
    <property type="entry name" value="Phosphoglycerate_kinase_CS"/>
</dbReference>
<dbReference type="InterPro" id="IPR015824">
    <property type="entry name" value="Phosphoglycerate_kinase_N"/>
</dbReference>
<dbReference type="InterPro" id="IPR036043">
    <property type="entry name" value="Phosphoglycerate_kinase_sf"/>
</dbReference>
<dbReference type="PANTHER" id="PTHR11406">
    <property type="entry name" value="PHOSPHOGLYCERATE KINASE"/>
    <property type="match status" value="1"/>
</dbReference>
<dbReference type="PANTHER" id="PTHR11406:SF23">
    <property type="entry name" value="PHOSPHOGLYCERATE KINASE 1, CHLOROPLASTIC-RELATED"/>
    <property type="match status" value="1"/>
</dbReference>
<dbReference type="Pfam" id="PF00162">
    <property type="entry name" value="PGK"/>
    <property type="match status" value="1"/>
</dbReference>
<dbReference type="PIRSF" id="PIRSF000724">
    <property type="entry name" value="Pgk"/>
    <property type="match status" value="1"/>
</dbReference>
<dbReference type="PRINTS" id="PR00477">
    <property type="entry name" value="PHGLYCKINASE"/>
</dbReference>
<dbReference type="SUPFAM" id="SSF53748">
    <property type="entry name" value="Phosphoglycerate kinase"/>
    <property type="match status" value="1"/>
</dbReference>
<dbReference type="PROSITE" id="PS00111">
    <property type="entry name" value="PGLYCERATE_KINASE"/>
    <property type="match status" value="1"/>
</dbReference>
<evidence type="ECO:0000255" key="1">
    <source>
        <dbReference type="HAMAP-Rule" id="MF_00145"/>
    </source>
</evidence>